<organism>
    <name type="scientific">Vibrio vulnificus (strain CMCP6)</name>
    <dbReference type="NCBI Taxonomy" id="216895"/>
    <lineage>
        <taxon>Bacteria</taxon>
        <taxon>Pseudomonadati</taxon>
        <taxon>Pseudomonadota</taxon>
        <taxon>Gammaproteobacteria</taxon>
        <taxon>Vibrionales</taxon>
        <taxon>Vibrionaceae</taxon>
        <taxon>Vibrio</taxon>
    </lineage>
</organism>
<name>RS21_VIBVU</name>
<comment type="similarity">
    <text evidence="2">Belongs to the bacterial ribosomal protein bS21 family.</text>
</comment>
<evidence type="ECO:0000256" key="1">
    <source>
        <dbReference type="SAM" id="MobiDB-lite"/>
    </source>
</evidence>
<evidence type="ECO:0000305" key="2"/>
<sequence length="71" mass="8487">MPVVKVRENEPFDVALRRFKRSCEKAGILSEVRRREHYEKPTTVRKRAKAAAQKRHAKKLARENARRVRLY</sequence>
<dbReference type="EMBL" id="AE016795">
    <property type="protein sequence ID" value="AAO09143.1"/>
    <property type="molecule type" value="Genomic_DNA"/>
</dbReference>
<dbReference type="RefSeq" id="WP_001145625.1">
    <property type="nucleotide sequence ID" value="NC_004459.3"/>
</dbReference>
<dbReference type="SMR" id="P66534"/>
<dbReference type="GeneID" id="97540092"/>
<dbReference type="KEGG" id="vvu:VV1_0629"/>
<dbReference type="HOGENOM" id="CLU_159258_1_0_6"/>
<dbReference type="Proteomes" id="UP000002275">
    <property type="component" value="Chromosome 1"/>
</dbReference>
<dbReference type="GO" id="GO:1990904">
    <property type="term" value="C:ribonucleoprotein complex"/>
    <property type="evidence" value="ECO:0007669"/>
    <property type="project" value="UniProtKB-KW"/>
</dbReference>
<dbReference type="GO" id="GO:0005840">
    <property type="term" value="C:ribosome"/>
    <property type="evidence" value="ECO:0007669"/>
    <property type="project" value="UniProtKB-KW"/>
</dbReference>
<dbReference type="GO" id="GO:0003735">
    <property type="term" value="F:structural constituent of ribosome"/>
    <property type="evidence" value="ECO:0007669"/>
    <property type="project" value="InterPro"/>
</dbReference>
<dbReference type="GO" id="GO:0006412">
    <property type="term" value="P:translation"/>
    <property type="evidence" value="ECO:0007669"/>
    <property type="project" value="UniProtKB-UniRule"/>
</dbReference>
<dbReference type="FunFam" id="1.20.5.1150:FF:000001">
    <property type="entry name" value="30S ribosomal protein S21"/>
    <property type="match status" value="1"/>
</dbReference>
<dbReference type="Gene3D" id="1.20.5.1150">
    <property type="entry name" value="Ribosomal protein S8"/>
    <property type="match status" value="1"/>
</dbReference>
<dbReference type="HAMAP" id="MF_00358">
    <property type="entry name" value="Ribosomal_bS21"/>
    <property type="match status" value="1"/>
</dbReference>
<dbReference type="InterPro" id="IPR001911">
    <property type="entry name" value="Ribosomal_bS21"/>
</dbReference>
<dbReference type="InterPro" id="IPR018278">
    <property type="entry name" value="Ribosomal_bS21_CS"/>
</dbReference>
<dbReference type="InterPro" id="IPR038380">
    <property type="entry name" value="Ribosomal_bS21_sf"/>
</dbReference>
<dbReference type="NCBIfam" id="TIGR00030">
    <property type="entry name" value="S21p"/>
    <property type="match status" value="1"/>
</dbReference>
<dbReference type="PANTHER" id="PTHR21109">
    <property type="entry name" value="MITOCHONDRIAL 28S RIBOSOMAL PROTEIN S21"/>
    <property type="match status" value="1"/>
</dbReference>
<dbReference type="PANTHER" id="PTHR21109:SF22">
    <property type="entry name" value="SMALL RIBOSOMAL SUBUNIT PROTEIN BS21"/>
    <property type="match status" value="1"/>
</dbReference>
<dbReference type="Pfam" id="PF01165">
    <property type="entry name" value="Ribosomal_S21"/>
    <property type="match status" value="1"/>
</dbReference>
<dbReference type="PRINTS" id="PR00976">
    <property type="entry name" value="RIBOSOMALS21"/>
</dbReference>
<dbReference type="PROSITE" id="PS01181">
    <property type="entry name" value="RIBOSOMAL_S21"/>
    <property type="match status" value="1"/>
</dbReference>
<gene>
    <name type="primary">rpsU</name>
    <name type="ordered locus">VV1_0629</name>
</gene>
<proteinExistence type="inferred from homology"/>
<accession>P66534</accession>
<accession>Q9KUJ9</accession>
<keyword id="KW-0687">Ribonucleoprotein</keyword>
<keyword id="KW-0689">Ribosomal protein</keyword>
<feature type="chain" id="PRO_0000178401" description="Small ribosomal subunit protein bS21">
    <location>
        <begin position="1"/>
        <end position="71"/>
    </location>
</feature>
<feature type="region of interest" description="Disordered" evidence="1">
    <location>
        <begin position="39"/>
        <end position="71"/>
    </location>
</feature>
<feature type="compositionally biased region" description="Basic residues" evidence="1">
    <location>
        <begin position="43"/>
        <end position="59"/>
    </location>
</feature>
<feature type="compositionally biased region" description="Basic and acidic residues" evidence="1">
    <location>
        <begin position="60"/>
        <end position="71"/>
    </location>
</feature>
<protein>
    <recommendedName>
        <fullName evidence="2">Small ribosomal subunit protein bS21</fullName>
    </recommendedName>
    <alternativeName>
        <fullName>30S ribosomal protein S21</fullName>
    </alternativeName>
</protein>
<reference key="1">
    <citation type="submission" date="2002-12" db="EMBL/GenBank/DDBJ databases">
        <title>Complete genome sequence of Vibrio vulnificus CMCP6.</title>
        <authorList>
            <person name="Rhee J.H."/>
            <person name="Kim S.Y."/>
            <person name="Chung S.S."/>
            <person name="Kim J.J."/>
            <person name="Moon Y.H."/>
            <person name="Jeong H."/>
            <person name="Choy H.E."/>
        </authorList>
    </citation>
    <scope>NUCLEOTIDE SEQUENCE [LARGE SCALE GENOMIC DNA]</scope>
    <source>
        <strain>CMCP6</strain>
    </source>
</reference>